<feature type="chain" id="PRO_1000136709" description="K(+)/H(+) antiporter NhaP2">
    <location>
        <begin position="1"/>
        <end position="577"/>
    </location>
</feature>
<feature type="transmembrane region" description="Helical" evidence="1">
    <location>
        <begin position="3"/>
        <end position="23"/>
    </location>
</feature>
<feature type="transmembrane region" description="Helical" evidence="1">
    <location>
        <begin position="30"/>
        <end position="50"/>
    </location>
</feature>
<feature type="transmembrane region" description="Helical" evidence="1">
    <location>
        <begin position="58"/>
        <end position="78"/>
    </location>
</feature>
<feature type="transmembrane region" description="Helical" evidence="1">
    <location>
        <begin position="87"/>
        <end position="107"/>
    </location>
</feature>
<feature type="transmembrane region" description="Helical" evidence="1">
    <location>
        <begin position="109"/>
        <end position="129"/>
    </location>
</feature>
<feature type="transmembrane region" description="Helical" evidence="1">
    <location>
        <begin position="185"/>
        <end position="205"/>
    </location>
</feature>
<feature type="transmembrane region" description="Helical" evidence="1">
    <location>
        <begin position="221"/>
        <end position="241"/>
    </location>
</feature>
<feature type="transmembrane region" description="Helical" evidence="1">
    <location>
        <begin position="271"/>
        <end position="291"/>
    </location>
</feature>
<feature type="transmembrane region" description="Helical" evidence="1">
    <location>
        <begin position="293"/>
        <end position="313"/>
    </location>
</feature>
<feature type="transmembrane region" description="Helical" evidence="1">
    <location>
        <begin position="334"/>
        <end position="354"/>
    </location>
</feature>
<feature type="transmembrane region" description="Helical" evidence="1">
    <location>
        <begin position="363"/>
        <end position="383"/>
    </location>
</feature>
<feature type="domain" description="RCK C-terminal" evidence="1">
    <location>
        <begin position="403"/>
        <end position="485"/>
    </location>
</feature>
<proteinExistence type="inferred from homology"/>
<name>NHAP2_SALA4</name>
<comment type="function">
    <text evidence="1">K(+)/H(+) antiporter that extrudes potassium in exchange for external protons and maintains the internal concentration of potassium under toxic levels.</text>
</comment>
<comment type="catalytic activity">
    <reaction evidence="1">
        <text>K(+)(in) + H(+)(out) = K(+)(out) + H(+)(in)</text>
        <dbReference type="Rhea" id="RHEA:29467"/>
        <dbReference type="ChEBI" id="CHEBI:15378"/>
        <dbReference type="ChEBI" id="CHEBI:29103"/>
    </reaction>
    <physiologicalReaction direction="left-to-right" evidence="1">
        <dbReference type="Rhea" id="RHEA:29468"/>
    </physiologicalReaction>
</comment>
<comment type="subcellular location">
    <subcellularLocation>
        <location evidence="1">Cell inner membrane</location>
        <topology evidence="1">Multi-pass membrane protein</topology>
    </subcellularLocation>
</comment>
<comment type="similarity">
    <text evidence="1">Belongs to the monovalent cation:proton antiporter 1 (CPA1) transporter (TC 2.A.36) family. NhaP2 subfamily.</text>
</comment>
<gene>
    <name evidence="1" type="primary">nhaP2</name>
    <name type="synonym">cvrA</name>
    <name type="ordered locus">SeAg_B1332</name>
</gene>
<reference key="1">
    <citation type="journal article" date="2011" name="J. Bacteriol.">
        <title>Comparative genomics of 28 Salmonella enterica isolates: evidence for CRISPR-mediated adaptive sublineage evolution.</title>
        <authorList>
            <person name="Fricke W.F."/>
            <person name="Mammel M.K."/>
            <person name="McDermott P.F."/>
            <person name="Tartera C."/>
            <person name="White D.G."/>
            <person name="Leclerc J.E."/>
            <person name="Ravel J."/>
            <person name="Cebula T.A."/>
        </authorList>
    </citation>
    <scope>NUCLEOTIDE SEQUENCE [LARGE SCALE GENOMIC DNA]</scope>
    <source>
        <strain>SL483</strain>
    </source>
</reference>
<accession>B5F4E6</accession>
<organism>
    <name type="scientific">Salmonella agona (strain SL483)</name>
    <dbReference type="NCBI Taxonomy" id="454166"/>
    <lineage>
        <taxon>Bacteria</taxon>
        <taxon>Pseudomonadati</taxon>
        <taxon>Pseudomonadota</taxon>
        <taxon>Gammaproteobacteria</taxon>
        <taxon>Enterobacterales</taxon>
        <taxon>Enterobacteriaceae</taxon>
        <taxon>Salmonella</taxon>
    </lineage>
</organism>
<evidence type="ECO:0000255" key="1">
    <source>
        <dbReference type="HAMAP-Rule" id="MF_01075"/>
    </source>
</evidence>
<dbReference type="EMBL" id="CP001138">
    <property type="protein sequence ID" value="ACH49314.1"/>
    <property type="molecule type" value="Genomic_DNA"/>
</dbReference>
<dbReference type="RefSeq" id="WP_000338376.1">
    <property type="nucleotide sequence ID" value="NC_011149.1"/>
</dbReference>
<dbReference type="SMR" id="B5F4E6"/>
<dbReference type="KEGG" id="sea:SeAg_B1332"/>
<dbReference type="HOGENOM" id="CLU_005912_9_2_6"/>
<dbReference type="Proteomes" id="UP000008819">
    <property type="component" value="Chromosome"/>
</dbReference>
<dbReference type="GO" id="GO:0005886">
    <property type="term" value="C:plasma membrane"/>
    <property type="evidence" value="ECO:0007669"/>
    <property type="project" value="UniProtKB-SubCell"/>
</dbReference>
<dbReference type="GO" id="GO:0050660">
    <property type="term" value="F:flavin adenine dinucleotide binding"/>
    <property type="evidence" value="ECO:0007669"/>
    <property type="project" value="InterPro"/>
</dbReference>
<dbReference type="GO" id="GO:0015386">
    <property type="term" value="F:potassium:proton antiporter activity"/>
    <property type="evidence" value="ECO:0007669"/>
    <property type="project" value="UniProtKB-UniRule"/>
</dbReference>
<dbReference type="GO" id="GO:0006884">
    <property type="term" value="P:cell volume homeostasis"/>
    <property type="evidence" value="ECO:0007669"/>
    <property type="project" value="InterPro"/>
</dbReference>
<dbReference type="FunFam" id="1.20.1530.20:FF:000002">
    <property type="entry name" value="K(+)/H(+) antiporter NhaP2"/>
    <property type="match status" value="1"/>
</dbReference>
<dbReference type="Gene3D" id="1.20.1530.20">
    <property type="match status" value="1"/>
</dbReference>
<dbReference type="Gene3D" id="3.30.465.10">
    <property type="match status" value="1"/>
</dbReference>
<dbReference type="Gene3D" id="3.30.70.1450">
    <property type="entry name" value="Regulator of K+ conductance, C-terminal domain"/>
    <property type="match status" value="1"/>
</dbReference>
<dbReference type="HAMAP" id="MF_01075">
    <property type="entry name" value="NhaP2"/>
    <property type="match status" value="1"/>
</dbReference>
<dbReference type="InterPro" id="IPR006153">
    <property type="entry name" value="Cation/H_exchanger_TM"/>
</dbReference>
<dbReference type="InterPro" id="IPR036318">
    <property type="entry name" value="FAD-bd_PCMH-like_sf"/>
</dbReference>
<dbReference type="InterPro" id="IPR016169">
    <property type="entry name" value="FAD-bd_PCMH_sub2"/>
</dbReference>
<dbReference type="InterPro" id="IPR038770">
    <property type="entry name" value="Na+/solute_symporter_sf"/>
</dbReference>
<dbReference type="InterPro" id="IPR023729">
    <property type="entry name" value="NhaP2"/>
</dbReference>
<dbReference type="InterPro" id="IPR006037">
    <property type="entry name" value="RCK_C"/>
</dbReference>
<dbReference type="InterPro" id="IPR036721">
    <property type="entry name" value="RCK_C_sf"/>
</dbReference>
<dbReference type="InterPro" id="IPR005170">
    <property type="entry name" value="Transptr-assoc_dom"/>
</dbReference>
<dbReference type="NCBIfam" id="NF003714">
    <property type="entry name" value="PRK05326.1-1"/>
    <property type="match status" value="1"/>
</dbReference>
<dbReference type="NCBIfam" id="NF003715">
    <property type="entry name" value="PRK05326.1-2"/>
    <property type="match status" value="1"/>
</dbReference>
<dbReference type="NCBIfam" id="NF003716">
    <property type="entry name" value="PRK05326.1-3"/>
    <property type="match status" value="1"/>
</dbReference>
<dbReference type="PANTHER" id="PTHR32507:SF7">
    <property type="entry name" value="K(+)_H(+) ANTIPORTER NHAP2"/>
    <property type="match status" value="1"/>
</dbReference>
<dbReference type="PANTHER" id="PTHR32507">
    <property type="entry name" value="NA(+)/H(+) ANTIPORTER 1"/>
    <property type="match status" value="1"/>
</dbReference>
<dbReference type="Pfam" id="PF03471">
    <property type="entry name" value="CorC_HlyC"/>
    <property type="match status" value="1"/>
</dbReference>
<dbReference type="Pfam" id="PF00999">
    <property type="entry name" value="Na_H_Exchanger"/>
    <property type="match status" value="1"/>
</dbReference>
<dbReference type="Pfam" id="PF02080">
    <property type="entry name" value="TrkA_C"/>
    <property type="match status" value="1"/>
</dbReference>
<dbReference type="SMART" id="SM01091">
    <property type="entry name" value="CorC_HlyC"/>
    <property type="match status" value="1"/>
</dbReference>
<dbReference type="SUPFAM" id="SSF56176">
    <property type="entry name" value="FAD-binding/transporter-associated domain-like"/>
    <property type="match status" value="1"/>
</dbReference>
<dbReference type="SUPFAM" id="SSF116726">
    <property type="entry name" value="TrkA C-terminal domain-like"/>
    <property type="match status" value="1"/>
</dbReference>
<dbReference type="PROSITE" id="PS51202">
    <property type="entry name" value="RCK_C"/>
    <property type="match status" value="1"/>
</dbReference>
<keyword id="KW-0050">Antiport</keyword>
<keyword id="KW-0997">Cell inner membrane</keyword>
<keyword id="KW-1003">Cell membrane</keyword>
<keyword id="KW-0406">Ion transport</keyword>
<keyword id="KW-0472">Membrane</keyword>
<keyword id="KW-0630">Potassium</keyword>
<keyword id="KW-0633">Potassium transport</keyword>
<keyword id="KW-0812">Transmembrane</keyword>
<keyword id="KW-1133">Transmembrane helix</keyword>
<keyword id="KW-0813">Transport</keyword>
<protein>
    <recommendedName>
        <fullName evidence="1">K(+)/H(+) antiporter NhaP2</fullName>
    </recommendedName>
    <alternativeName>
        <fullName evidence="1">Potassium/proton antiporter NhaP2</fullName>
    </alternativeName>
</protein>
<sequence>MDAATIISLFILGSILVTSSILLSSFSSRLGIPILVIFLAIGMLAGVDGIGGIPFDNYPFAYMVSNLALAIILLDGGMRTQASSFRVALGPALSLATLGVLITSGLTGMMAAWLFHLDLIEGLLIGAIVGSTDAAAVFSLLGGKGLNERVGSTLEIESGSNDPMAVFLTITLIEMIQKHETGLDWMFAVHIIQQFGLGIVFGLGGGYLLQQMINRISLPSGLYPMLALSGGILIFALTTALEGSGILAVYLCGFLLGNRPIRNRYGILQNFDGLAWLAQIAMFLVLGLLVTPSDLWPIAVPALILSIWMIFFARPLSVFTGLLPFRGFNLRERIFISWVGLRGAVPIILAVFPMMAGLENARLFFNVAFFVVLVSLLLQGTSLSWAAKRAKVVVPPVGWPVSRVGLDIHPDNPWEQFIYQLSADKWCVGAALRDLHMPNETRIAALFRNNELFHPTGSTRLQEGDVLCVIGRERDLPALGKLFSQSPPVSLDQRFFGDFILEANAKFADVALIYGLEEGTEYRDKQQTLGEIIQQLLGAAPVVGDQVEFGGMIWTVAEKEDNVVRKIGVRVAEDEAE</sequence>